<gene>
    <name type="primary">CHS6</name>
</gene>
<name>CHS6_PEA</name>
<reference key="1">
    <citation type="journal article" date="1992" name="Plant Mol. Biol.">
        <title>Molecular cloning of chalcone synthase cDNAs from Pisum sativum.</title>
        <authorList>
            <person name="Ichinose Y."/>
            <person name="Kawamata S."/>
            <person name="Yamada T."/>
            <person name="An C."/>
            <person name="Kajiwara T."/>
            <person name="Shiraishi T."/>
            <person name="Oku H."/>
        </authorList>
    </citation>
    <scope>NUCLEOTIDE SEQUENCE [MRNA]</scope>
    <source>
        <strain>cv. Midoriusui</strain>
        <tissue>Epicotyl</tissue>
    </source>
</reference>
<organism>
    <name type="scientific">Pisum sativum</name>
    <name type="common">Garden pea</name>
    <name type="synonym">Lathyrus oleraceus</name>
    <dbReference type="NCBI Taxonomy" id="3888"/>
    <lineage>
        <taxon>Eukaryota</taxon>
        <taxon>Viridiplantae</taxon>
        <taxon>Streptophyta</taxon>
        <taxon>Embryophyta</taxon>
        <taxon>Tracheophyta</taxon>
        <taxon>Spermatophyta</taxon>
        <taxon>Magnoliopsida</taxon>
        <taxon>eudicotyledons</taxon>
        <taxon>Gunneridae</taxon>
        <taxon>Pentapetalae</taxon>
        <taxon>rosids</taxon>
        <taxon>fabids</taxon>
        <taxon>Fabales</taxon>
        <taxon>Fabaceae</taxon>
        <taxon>Papilionoideae</taxon>
        <taxon>50 kb inversion clade</taxon>
        <taxon>NPAAA clade</taxon>
        <taxon>Hologalegina</taxon>
        <taxon>IRL clade</taxon>
        <taxon>Fabeae</taxon>
        <taxon>Pisum</taxon>
    </lineage>
</organism>
<proteinExistence type="evidence at transcript level"/>
<keyword id="KW-0012">Acyltransferase</keyword>
<keyword id="KW-0284">Flavonoid biosynthesis</keyword>
<keyword id="KW-0808">Transferase</keyword>
<accession>Q01288</accession>
<protein>
    <recommendedName>
        <fullName>Chalcone synthase 6</fullName>
        <ecNumber>2.3.1.74</ecNumber>
    </recommendedName>
    <alternativeName>
        <fullName>Naregenin-chalcone synthase 6</fullName>
    </alternativeName>
</protein>
<comment type="function">
    <text>The primary product of this enzyme is 4,2',4',6'-tetrahydroxychalcone (also termed naringenin-chalcone or chalcone) which can under specific conditions spontaneously isomerize into naringenin.</text>
</comment>
<comment type="catalytic activity">
    <reaction evidence="1">
        <text>(E)-4-coumaroyl-CoA + 3 malonyl-CoA + 3 H(+) = 2',4,4',6'-tetrahydroxychalcone + 3 CO2 + 4 CoA</text>
        <dbReference type="Rhea" id="RHEA:11128"/>
        <dbReference type="ChEBI" id="CHEBI:15378"/>
        <dbReference type="ChEBI" id="CHEBI:15413"/>
        <dbReference type="ChEBI" id="CHEBI:16526"/>
        <dbReference type="ChEBI" id="CHEBI:57287"/>
        <dbReference type="ChEBI" id="CHEBI:57384"/>
        <dbReference type="ChEBI" id="CHEBI:85008"/>
        <dbReference type="EC" id="2.3.1.74"/>
    </reaction>
</comment>
<comment type="pathway">
    <text>Secondary metabolite biosynthesis; flavonoid biosynthesis.</text>
</comment>
<comment type="similarity">
    <text evidence="2">Belongs to the thiolase-like superfamily. Chalcone/stilbene synthases family.</text>
</comment>
<dbReference type="EC" id="2.3.1.74"/>
<dbReference type="EMBL" id="X63335">
    <property type="protein sequence ID" value="CAA44935.1"/>
    <property type="molecule type" value="mRNA"/>
</dbReference>
<dbReference type="PIR" id="S20933">
    <property type="entry name" value="S20933"/>
</dbReference>
<dbReference type="SMR" id="Q01288"/>
<dbReference type="OrthoDB" id="1854138at2759"/>
<dbReference type="UniPathway" id="UPA00154"/>
<dbReference type="GO" id="GO:0016210">
    <property type="term" value="F:naringenin-chalcone synthase activity"/>
    <property type="evidence" value="ECO:0007669"/>
    <property type="project" value="UniProtKB-EC"/>
</dbReference>
<dbReference type="GO" id="GO:0009813">
    <property type="term" value="P:flavonoid biosynthetic process"/>
    <property type="evidence" value="ECO:0007669"/>
    <property type="project" value="UniProtKB-UniPathway"/>
</dbReference>
<dbReference type="GO" id="GO:0030639">
    <property type="term" value="P:polyketide biosynthetic process"/>
    <property type="evidence" value="ECO:0007669"/>
    <property type="project" value="TreeGrafter"/>
</dbReference>
<dbReference type="CDD" id="cd00831">
    <property type="entry name" value="CHS_like"/>
    <property type="match status" value="1"/>
</dbReference>
<dbReference type="FunFam" id="3.40.47.10:FF:000014">
    <property type="entry name" value="Chalcone synthase 1"/>
    <property type="match status" value="1"/>
</dbReference>
<dbReference type="FunFam" id="3.40.47.10:FF:000025">
    <property type="entry name" value="Chalcone synthase 2"/>
    <property type="match status" value="1"/>
</dbReference>
<dbReference type="Gene3D" id="3.40.47.10">
    <property type="match status" value="2"/>
</dbReference>
<dbReference type="InterPro" id="IPR012328">
    <property type="entry name" value="Chalcone/stilbene_synt_C"/>
</dbReference>
<dbReference type="InterPro" id="IPR001099">
    <property type="entry name" value="Chalcone/stilbene_synt_N"/>
</dbReference>
<dbReference type="InterPro" id="IPR018088">
    <property type="entry name" value="Chalcone/stilbene_synthase_AS"/>
</dbReference>
<dbReference type="InterPro" id="IPR011141">
    <property type="entry name" value="Polyketide_synthase_type-III"/>
</dbReference>
<dbReference type="InterPro" id="IPR016039">
    <property type="entry name" value="Thiolase-like"/>
</dbReference>
<dbReference type="PANTHER" id="PTHR11877:SF62">
    <property type="entry name" value="CHALCONE SYNTHASE 7"/>
    <property type="match status" value="1"/>
</dbReference>
<dbReference type="PANTHER" id="PTHR11877">
    <property type="entry name" value="HYDROXYMETHYLGLUTARYL-COA SYNTHASE"/>
    <property type="match status" value="1"/>
</dbReference>
<dbReference type="Pfam" id="PF02797">
    <property type="entry name" value="Chal_sti_synt_C"/>
    <property type="match status" value="1"/>
</dbReference>
<dbReference type="Pfam" id="PF00195">
    <property type="entry name" value="Chal_sti_synt_N"/>
    <property type="match status" value="1"/>
</dbReference>
<dbReference type="PIRSF" id="PIRSF000451">
    <property type="entry name" value="PKS_III"/>
    <property type="match status" value="1"/>
</dbReference>
<dbReference type="SUPFAM" id="SSF53901">
    <property type="entry name" value="Thiolase-like"/>
    <property type="match status" value="2"/>
</dbReference>
<dbReference type="PROSITE" id="PS00441">
    <property type="entry name" value="CHALCONE_SYNTH"/>
    <property type="match status" value="1"/>
</dbReference>
<feature type="chain" id="PRO_0000216023" description="Chalcone synthase 6">
    <location>
        <begin position="1"/>
        <end position="389"/>
    </location>
</feature>
<feature type="active site" evidence="1">
    <location>
        <position position="164"/>
    </location>
</feature>
<sequence>MVSVSEIRKAQRAEGPATILAIGTATPANCVEQSTYPDFYFKITNSEHKTVLKEKFQRMCDKSMIKRRYMYLTEEILKENPSLCEYMAPSLDARQDMVVVEVPRLGKEAAVKAIKEWGQPKSKITHLIFCTTSGVDMPGADYQLTKLLGLRPYVKRYMMYQQGCFAGGTVLRLAKDLAENNKGARVLVVCSEVTAVTFRGPSDTHLDSLVGQALFGDGAAALIVGSDPLPEIEKPIFEMVWTAQTIAPDSEGAIDGHLREAGLTFHLLKDVPGIVSKNINKALVEAFQPLNIDDYNSIFWIAHPGGPAILDQVEEKLGLKPEKMKATREVLSEYGNMSSACVLFILDEMRKKSAQQGLKTTGEGLDWGVLFGFGPGLTIETVVLHSVAI</sequence>
<evidence type="ECO:0000255" key="1">
    <source>
        <dbReference type="PROSITE-ProRule" id="PRU10023"/>
    </source>
</evidence>
<evidence type="ECO:0000305" key="2"/>